<gene>
    <name evidence="8" type="primary">uvrD</name>
    <name type="synonym">mutU</name>
    <name type="synonym">pdeB</name>
    <name type="synonym">rad</name>
    <name type="synonym">recL</name>
    <name type="ordered locus">b3813</name>
    <name type="ordered locus">JW3786</name>
</gene>
<proteinExistence type="evidence at protein level"/>
<keyword id="KW-0002">3D-structure</keyword>
<keyword id="KW-0067">ATP-binding</keyword>
<keyword id="KW-0903">Direct protein sequencing</keyword>
<keyword id="KW-0227">DNA damage</keyword>
<keyword id="KW-0234">DNA repair</keyword>
<keyword id="KW-0235">DNA replication</keyword>
<keyword id="KW-0238">DNA-binding</keyword>
<keyword id="KW-0347">Helicase</keyword>
<keyword id="KW-0378">Hydrolase</keyword>
<keyword id="KW-0413">Isomerase</keyword>
<keyword id="KW-0547">Nucleotide-binding</keyword>
<keyword id="KW-1185">Reference proteome</keyword>
<keyword id="KW-0742">SOS response</keyword>
<accession>P03018</accession>
<accession>P76758</accession>
<accession>Q2M8B9</accession>
<accession>Q47709</accession>
<comment type="function">
    <text evidence="4 6 7 10">A helicase with DNA-dependent ATPase activity (PubMed:8419285). Unwinds DNA duplexes with 3'-5' polarity (PubMed:2170128, PubMed:8419285). Translocates on single-stranded DNA with 3'-5' polarity (PubMed:2942537). Initiates unwinding more efficiently from a nicked substrate than double-stranded DNA (PubMed:2170128, PubMed:8419285). Involved in the post-incision events of nucleotide excision repair and methyl-directed mismatch repair, and probably also in repair of alkylated DNA (Probable) (PubMed:25484163).</text>
</comment>
<comment type="catalytic activity">
    <reaction evidence="4 7">
        <text>Couples ATP hydrolysis with the unwinding of duplex DNA by translocating in the 3'-5' direction.</text>
        <dbReference type="EC" id="5.6.2.4"/>
    </reaction>
</comment>
<comment type="catalytic activity">
    <reaction evidence="7">
        <text>ATP + H2O = ADP + phosphate + H(+)</text>
        <dbReference type="Rhea" id="RHEA:13065"/>
        <dbReference type="ChEBI" id="CHEBI:15377"/>
        <dbReference type="ChEBI" id="CHEBI:15378"/>
        <dbReference type="ChEBI" id="CHEBI:30616"/>
        <dbReference type="ChEBI" id="CHEBI:43474"/>
        <dbReference type="ChEBI" id="CHEBI:456216"/>
        <dbReference type="EC" id="5.6.2.4"/>
    </reaction>
</comment>
<comment type="biophysicochemical properties">
    <kinetics>
        <KM evidence="7">0.05 mM for ATP</KM>
    </kinetics>
</comment>
<comment type="interaction">
    <interactant intactId="EBI-559573">
        <id>P03018</id>
    </interactant>
    <interactant intactId="EBI-542856">
        <id>P0A9P0</id>
        <label>lpdA</label>
    </interactant>
    <organismsDiffer>false</organismsDiffer>
    <experiments>3</experiments>
</comment>
<comment type="interaction">
    <interactant intactId="EBI-559573">
        <id>P03018</id>
    </interactant>
    <interactant intactId="EBI-551247">
        <id>P25665</id>
        <label>metE</label>
    </interactant>
    <organismsDiffer>false</organismsDiffer>
    <experiments>2</experiments>
</comment>
<comment type="interaction">
    <interactant intactId="EBI-559573">
        <id>P03018</id>
    </interactant>
    <interactant intactId="EBI-554913">
        <id>P23367</id>
        <label>mutL</label>
    </interactant>
    <organismsDiffer>false</organismsDiffer>
    <experiments>7</experiments>
</comment>
<comment type="interaction">
    <interactant intactId="EBI-559573">
        <id>P03018</id>
    </interactant>
    <interactant intactId="EBI-544996">
        <id>P0A8V2</id>
        <label>rpoB</label>
    </interactant>
    <organismsDiffer>false</organismsDiffer>
    <experiments>3</experiments>
</comment>
<comment type="interaction">
    <interactant intactId="EBI-559573">
        <id>P03018</id>
    </interactant>
    <interactant intactId="EBI-543604">
        <id>P0A8T7</id>
        <label>rpoC</label>
    </interactant>
    <organismsDiffer>false</organismsDiffer>
    <experiments>3</experiments>
</comment>
<comment type="disruption phenotype">
    <text evidence="5">Strongly sensitive to UV, ciprofloxacin (CFX), and azidothymidine (AZT) in single deletion mutants, radA-uvrD double deletions are more sensitive yet. Adding recF mutations almost completely suppresses AZT and partially suppresses UV and CFX sensitivity, suggesting RadA processes a class of intermediates that accumulate in uvrD mutants (PubMed:25484163).</text>
</comment>
<comment type="similarity">
    <text evidence="9">Belongs to the helicase family. UvrD subfamily.</text>
</comment>
<evidence type="ECO:0000250" key="1"/>
<evidence type="ECO:0000255" key="2">
    <source>
        <dbReference type="PROSITE-ProRule" id="PRU00560"/>
    </source>
</evidence>
<evidence type="ECO:0000255" key="3">
    <source>
        <dbReference type="PROSITE-ProRule" id="PRU00617"/>
    </source>
</evidence>
<evidence type="ECO:0000269" key="4">
    <source>
    </source>
</evidence>
<evidence type="ECO:0000269" key="5">
    <source>
    </source>
</evidence>
<evidence type="ECO:0000269" key="6">
    <source>
    </source>
</evidence>
<evidence type="ECO:0000269" key="7">
    <source>
    </source>
</evidence>
<evidence type="ECO:0000303" key="8">
    <source>
    </source>
</evidence>
<evidence type="ECO:0000305" key="9"/>
<evidence type="ECO:0000305" key="10">
    <source>
    </source>
</evidence>
<evidence type="ECO:0007829" key="11">
    <source>
        <dbReference type="PDB" id="2IS1"/>
    </source>
</evidence>
<evidence type="ECO:0007829" key="12">
    <source>
        <dbReference type="PDB" id="2IS2"/>
    </source>
</evidence>
<evidence type="ECO:0007829" key="13">
    <source>
        <dbReference type="PDB" id="2IS4"/>
    </source>
</evidence>
<evidence type="ECO:0007829" key="14">
    <source>
        <dbReference type="PDB" id="2IS6"/>
    </source>
</evidence>
<evidence type="ECO:0007829" key="15">
    <source>
        <dbReference type="PDB" id="3LFU"/>
    </source>
</evidence>
<evidence type="ECO:0007829" key="16">
    <source>
        <dbReference type="PDB" id="6YI2"/>
    </source>
</evidence>
<evidence type="ECO:0007829" key="17">
    <source>
        <dbReference type="PDB" id="7EGS"/>
    </source>
</evidence>
<name>UVRD_ECOLI</name>
<dbReference type="EC" id="5.6.2.4" evidence="4 7"/>
<dbReference type="EMBL" id="X00738">
    <property type="protein sequence ID" value="CAA25321.1"/>
    <property type="molecule type" value="Genomic_DNA"/>
</dbReference>
<dbReference type="EMBL" id="D00069">
    <property type="protein sequence ID" value="BAA00048.1"/>
    <property type="molecule type" value="Genomic_DNA"/>
</dbReference>
<dbReference type="EMBL" id="X04037">
    <property type="protein sequence ID" value="CAA27671.1"/>
    <property type="molecule type" value="Genomic_DNA"/>
</dbReference>
<dbReference type="EMBL" id="M87049">
    <property type="protein sequence ID" value="AAA67609.1"/>
    <property type="molecule type" value="Genomic_DNA"/>
</dbReference>
<dbReference type="EMBL" id="U00096">
    <property type="protein sequence ID" value="AAC76816.1"/>
    <property type="molecule type" value="Genomic_DNA"/>
</dbReference>
<dbReference type="EMBL" id="AP009048">
    <property type="protein sequence ID" value="BAE77487.1"/>
    <property type="molecule type" value="Genomic_DNA"/>
</dbReference>
<dbReference type="EMBL" id="X00225">
    <property type="protein sequence ID" value="CAA25043.1"/>
    <property type="molecule type" value="Genomic_DNA"/>
</dbReference>
<dbReference type="EMBL" id="M38257">
    <property type="protein sequence ID" value="AAA24765.1"/>
    <property type="molecule type" value="Genomic_DNA"/>
</dbReference>
<dbReference type="PIR" id="F65185">
    <property type="entry name" value="HJECD2"/>
</dbReference>
<dbReference type="RefSeq" id="NP_418258.1">
    <property type="nucleotide sequence ID" value="NC_000913.3"/>
</dbReference>
<dbReference type="RefSeq" id="WP_000383406.1">
    <property type="nucleotide sequence ID" value="NZ_SSZK01000025.1"/>
</dbReference>
<dbReference type="PDB" id="2IS1">
    <property type="method" value="X-ray"/>
    <property type="resolution" value="2.90 A"/>
    <property type="chains" value="A/B=1-680"/>
</dbReference>
<dbReference type="PDB" id="2IS2">
    <property type="method" value="X-ray"/>
    <property type="resolution" value="3.00 A"/>
    <property type="chains" value="A/B=1-680"/>
</dbReference>
<dbReference type="PDB" id="2IS4">
    <property type="method" value="X-ray"/>
    <property type="resolution" value="2.60 A"/>
    <property type="chains" value="A/B=1-680"/>
</dbReference>
<dbReference type="PDB" id="2IS6">
    <property type="method" value="X-ray"/>
    <property type="resolution" value="2.20 A"/>
    <property type="chains" value="A/B=1-680"/>
</dbReference>
<dbReference type="PDB" id="3LFU">
    <property type="method" value="X-ray"/>
    <property type="resolution" value="1.80 A"/>
    <property type="chains" value="A=1-647"/>
</dbReference>
<dbReference type="PDB" id="6YI2">
    <property type="method" value="NMR"/>
    <property type="chains" value="A=645-720"/>
</dbReference>
<dbReference type="PDB" id="7EGS">
    <property type="method" value="X-ray"/>
    <property type="resolution" value="1.70 A"/>
    <property type="chains" value="B=654-720"/>
</dbReference>
<dbReference type="PDBsum" id="2IS1"/>
<dbReference type="PDBsum" id="2IS2"/>
<dbReference type="PDBsum" id="2IS4"/>
<dbReference type="PDBsum" id="2IS6"/>
<dbReference type="PDBsum" id="3LFU"/>
<dbReference type="PDBsum" id="6YI2"/>
<dbReference type="PDBsum" id="7EGS"/>
<dbReference type="SMR" id="P03018"/>
<dbReference type="BioGRID" id="4263340">
    <property type="interactions" value="268"/>
</dbReference>
<dbReference type="BioGRID" id="852644">
    <property type="interactions" value="3"/>
</dbReference>
<dbReference type="ComplexPortal" id="CPX-5542">
    <property type="entry name" value="MutL-UvrD DNA helicase complex"/>
</dbReference>
<dbReference type="DIP" id="DIP-11103N"/>
<dbReference type="FunCoup" id="P03018">
    <property type="interactions" value="601"/>
</dbReference>
<dbReference type="IntAct" id="P03018">
    <property type="interactions" value="39"/>
</dbReference>
<dbReference type="STRING" id="511145.b3813"/>
<dbReference type="jPOST" id="P03018"/>
<dbReference type="PaxDb" id="511145-b3813"/>
<dbReference type="EnsemblBacteria" id="AAC76816">
    <property type="protein sequence ID" value="AAC76816"/>
    <property type="gene ID" value="b3813"/>
</dbReference>
<dbReference type="GeneID" id="75204806"/>
<dbReference type="GeneID" id="948347"/>
<dbReference type="KEGG" id="ecj:JW3786"/>
<dbReference type="KEGG" id="eco:b3813"/>
<dbReference type="KEGG" id="ecoc:C3026_20640"/>
<dbReference type="PATRIC" id="fig|511145.12.peg.3929"/>
<dbReference type="EchoBASE" id="EB1057"/>
<dbReference type="eggNOG" id="COG0210">
    <property type="taxonomic scope" value="Bacteria"/>
</dbReference>
<dbReference type="HOGENOM" id="CLU_004585_5_2_6"/>
<dbReference type="InParanoid" id="P03018"/>
<dbReference type="OMA" id="DYPDATT"/>
<dbReference type="OrthoDB" id="9806690at2"/>
<dbReference type="PhylomeDB" id="P03018"/>
<dbReference type="BioCyc" id="EcoCyc:EG11064-MONOMER"/>
<dbReference type="BioCyc" id="MetaCyc:EG11064-MONOMER"/>
<dbReference type="BRENDA" id="3.6.4.12">
    <property type="organism ID" value="2026"/>
</dbReference>
<dbReference type="SABIO-RK" id="P03018"/>
<dbReference type="EvolutionaryTrace" id="P03018"/>
<dbReference type="PRO" id="PR:P03018"/>
<dbReference type="Proteomes" id="UP000000625">
    <property type="component" value="Chromosome"/>
</dbReference>
<dbReference type="GO" id="GO:0005829">
    <property type="term" value="C:cytosol"/>
    <property type="evidence" value="ECO:0000314"/>
    <property type="project" value="EcoCyc"/>
</dbReference>
<dbReference type="GO" id="GO:0033202">
    <property type="term" value="C:DNA helicase complex"/>
    <property type="evidence" value="ECO:0000314"/>
    <property type="project" value="EcoCyc"/>
</dbReference>
<dbReference type="GO" id="GO:0017117">
    <property type="term" value="C:single-stranded DNA-dependent ATP-dependent DNA helicase complex"/>
    <property type="evidence" value="ECO:0000353"/>
    <property type="project" value="ComplexPortal"/>
</dbReference>
<dbReference type="GO" id="GO:0043138">
    <property type="term" value="F:3'-5' DNA helicase activity"/>
    <property type="evidence" value="ECO:0000314"/>
    <property type="project" value="UniProtKB"/>
</dbReference>
<dbReference type="GO" id="GO:0005524">
    <property type="term" value="F:ATP binding"/>
    <property type="evidence" value="ECO:0007669"/>
    <property type="project" value="UniProtKB-KW"/>
</dbReference>
<dbReference type="GO" id="GO:0016887">
    <property type="term" value="F:ATP hydrolysis activity"/>
    <property type="evidence" value="ECO:0007669"/>
    <property type="project" value="RHEA"/>
</dbReference>
<dbReference type="GO" id="GO:0003677">
    <property type="term" value="F:DNA binding"/>
    <property type="evidence" value="ECO:0007669"/>
    <property type="project" value="UniProtKB-KW"/>
</dbReference>
<dbReference type="GO" id="GO:0003678">
    <property type="term" value="F:DNA helicase activity"/>
    <property type="evidence" value="ECO:0000314"/>
    <property type="project" value="CACAO"/>
</dbReference>
<dbReference type="GO" id="GO:0015616">
    <property type="term" value="F:DNA translocase activity"/>
    <property type="evidence" value="ECO:0000314"/>
    <property type="project" value="EcoCyc"/>
</dbReference>
<dbReference type="GO" id="GO:0042803">
    <property type="term" value="F:protein homodimerization activity"/>
    <property type="evidence" value="ECO:0000314"/>
    <property type="project" value="EcoCyc"/>
</dbReference>
<dbReference type="GO" id="GO:0017116">
    <property type="term" value="F:single-stranded DNA helicase activity"/>
    <property type="evidence" value="ECO:0000314"/>
    <property type="project" value="EcoCyc"/>
</dbReference>
<dbReference type="GO" id="GO:0006298">
    <property type="term" value="P:mismatch repair"/>
    <property type="evidence" value="ECO:0000315"/>
    <property type="project" value="EcoCyc"/>
</dbReference>
<dbReference type="GO" id="GO:0070716">
    <property type="term" value="P:mismatch repair involved in maintenance of fidelity involved in DNA-dependent DNA replication"/>
    <property type="evidence" value="ECO:0000314"/>
    <property type="project" value="ComplexPortal"/>
</dbReference>
<dbReference type="GO" id="GO:0006289">
    <property type="term" value="P:nucleotide-excision repair"/>
    <property type="evidence" value="ECO:0000314"/>
    <property type="project" value="EcoCyc"/>
</dbReference>
<dbReference type="GO" id="GO:0000725">
    <property type="term" value="P:recombinational repair"/>
    <property type="evidence" value="ECO:0000318"/>
    <property type="project" value="GO_Central"/>
</dbReference>
<dbReference type="GO" id="GO:0031297">
    <property type="term" value="P:replication fork processing"/>
    <property type="evidence" value="ECO:0000315"/>
    <property type="project" value="EcoCyc"/>
</dbReference>
<dbReference type="GO" id="GO:0009314">
    <property type="term" value="P:response to radiation"/>
    <property type="evidence" value="ECO:0000315"/>
    <property type="project" value="EcoCyc"/>
</dbReference>
<dbReference type="GO" id="GO:0070581">
    <property type="term" value="P:rolling circle DNA replication"/>
    <property type="evidence" value="ECO:0000315"/>
    <property type="project" value="EcoCyc"/>
</dbReference>
<dbReference type="GO" id="GO:0009432">
    <property type="term" value="P:SOS response"/>
    <property type="evidence" value="ECO:0000269"/>
    <property type="project" value="EcoCyc"/>
</dbReference>
<dbReference type="CDD" id="cd17932">
    <property type="entry name" value="DEXQc_UvrD"/>
    <property type="match status" value="1"/>
</dbReference>
<dbReference type="CDD" id="cd18807">
    <property type="entry name" value="SF1_C_UvrD"/>
    <property type="match status" value="1"/>
</dbReference>
<dbReference type="FunFam" id="3.40.50.300:FF:001201">
    <property type="entry name" value="ATP-dependent DNA helicase UvrD2"/>
    <property type="match status" value="1"/>
</dbReference>
<dbReference type="FunFam" id="1.10.10.160:FF:000002">
    <property type="entry name" value="DNA helicase"/>
    <property type="match status" value="1"/>
</dbReference>
<dbReference type="FunFam" id="1.10.486.10:FF:000001">
    <property type="entry name" value="DNA helicase"/>
    <property type="match status" value="1"/>
</dbReference>
<dbReference type="Gene3D" id="1.10.10.160">
    <property type="match status" value="1"/>
</dbReference>
<dbReference type="Gene3D" id="3.40.50.300">
    <property type="entry name" value="P-loop containing nucleotide triphosphate hydrolases"/>
    <property type="match status" value="2"/>
</dbReference>
<dbReference type="Gene3D" id="1.10.486.10">
    <property type="entry name" value="PCRA, domain 4"/>
    <property type="match status" value="1"/>
</dbReference>
<dbReference type="InterPro" id="IPR013986">
    <property type="entry name" value="DExx_box_DNA_helicase_dom_sf"/>
</dbReference>
<dbReference type="InterPro" id="IPR005753">
    <property type="entry name" value="DNA_helicase_ATP-dep_UvrD"/>
</dbReference>
<dbReference type="InterPro" id="IPR014017">
    <property type="entry name" value="DNA_helicase_UvrD-like_C"/>
</dbReference>
<dbReference type="InterPro" id="IPR000212">
    <property type="entry name" value="DNA_helicase_UvrD/REP"/>
</dbReference>
<dbReference type="InterPro" id="IPR027417">
    <property type="entry name" value="P-loop_NTPase"/>
</dbReference>
<dbReference type="InterPro" id="IPR014016">
    <property type="entry name" value="UvrD-like_ATP-bd"/>
</dbReference>
<dbReference type="NCBIfam" id="NF008743">
    <property type="entry name" value="PRK11773.1"/>
    <property type="match status" value="1"/>
</dbReference>
<dbReference type="NCBIfam" id="TIGR01075">
    <property type="entry name" value="uvrD"/>
    <property type="match status" value="1"/>
</dbReference>
<dbReference type="PANTHER" id="PTHR11070:SF2">
    <property type="entry name" value="ATP-DEPENDENT DNA HELICASE SRS2"/>
    <property type="match status" value="1"/>
</dbReference>
<dbReference type="PANTHER" id="PTHR11070">
    <property type="entry name" value="UVRD / RECB / PCRA DNA HELICASE FAMILY MEMBER"/>
    <property type="match status" value="1"/>
</dbReference>
<dbReference type="Pfam" id="PF21196">
    <property type="entry name" value="PcrA_UvrD_tudor"/>
    <property type="match status" value="1"/>
</dbReference>
<dbReference type="Pfam" id="PF00580">
    <property type="entry name" value="UvrD-helicase"/>
    <property type="match status" value="1"/>
</dbReference>
<dbReference type="Pfam" id="PF13361">
    <property type="entry name" value="UvrD_C"/>
    <property type="match status" value="1"/>
</dbReference>
<dbReference type="SUPFAM" id="SSF52540">
    <property type="entry name" value="P-loop containing nucleoside triphosphate hydrolases"/>
    <property type="match status" value="1"/>
</dbReference>
<dbReference type="PROSITE" id="PS51198">
    <property type="entry name" value="UVRD_HELICASE_ATP_BIND"/>
    <property type="match status" value="1"/>
</dbReference>
<dbReference type="PROSITE" id="PS51217">
    <property type="entry name" value="UVRD_HELICASE_CTER"/>
    <property type="match status" value="1"/>
</dbReference>
<organism>
    <name type="scientific">Escherichia coli (strain K12)</name>
    <dbReference type="NCBI Taxonomy" id="83333"/>
    <lineage>
        <taxon>Bacteria</taxon>
        <taxon>Pseudomonadati</taxon>
        <taxon>Pseudomonadota</taxon>
        <taxon>Gammaproteobacteria</taxon>
        <taxon>Enterobacterales</taxon>
        <taxon>Enterobacteriaceae</taxon>
        <taxon>Escherichia</taxon>
    </lineage>
</organism>
<protein>
    <recommendedName>
        <fullName>DNA helicase II</fullName>
        <ecNumber evidence="4 7">5.6.2.4</ecNumber>
    </recommendedName>
    <alternativeName>
        <fullName evidence="9">DNA 3'-5' helicase II</fullName>
    </alternativeName>
</protein>
<reference key="1">
    <citation type="journal article" date="1984" name="Nucleic Acids Res.">
        <title>The nucleotide sequence of the uvrD gene of E. coli.</title>
        <authorList>
            <person name="Finch P.W."/>
            <person name="Emmerson P.T."/>
        </authorList>
    </citation>
    <scope>NUCLEOTIDE SEQUENCE [GENOMIC DNA]</scope>
</reference>
<reference key="2">
    <citation type="journal article" date="1986" name="J. Biochem.">
        <title>Determination of the initiation sites of transcription and translation of the uvrD gene of Escherichia coli.</title>
        <authorList>
            <person name="Yamamoto Y."/>
            <person name="Ogawa T."/>
            <person name="Shinagawa H."/>
            <person name="Nakayama T."/>
            <person name="Matsuo H."/>
            <person name="Ogawa H."/>
        </authorList>
    </citation>
    <scope>NUCLEOTIDE SEQUENCE [GENOMIC DNA]</scope>
    <scope>PARTIAL PROTEIN SEQUENCE</scope>
</reference>
<reference key="3">
    <citation type="journal article" date="1992" name="Science">
        <title>Analysis of the Escherichia coli genome: DNA sequence of the region from 84.5 to 86.5 minutes.</title>
        <authorList>
            <person name="Daniels D.L."/>
            <person name="Plunkett G. III"/>
            <person name="Burland V.D."/>
            <person name="Blattner F.R."/>
        </authorList>
    </citation>
    <scope>NUCLEOTIDE SEQUENCE [LARGE SCALE GENOMIC DNA]</scope>
    <source>
        <strain>K12 / MG1655 / ATCC 47076</strain>
    </source>
</reference>
<reference key="4">
    <citation type="journal article" date="1997" name="Science">
        <title>The complete genome sequence of Escherichia coli K-12.</title>
        <authorList>
            <person name="Blattner F.R."/>
            <person name="Plunkett G. III"/>
            <person name="Bloch C.A."/>
            <person name="Perna N.T."/>
            <person name="Burland V."/>
            <person name="Riley M."/>
            <person name="Collado-Vides J."/>
            <person name="Glasner J.D."/>
            <person name="Rode C.K."/>
            <person name="Mayhew G.F."/>
            <person name="Gregor J."/>
            <person name="Davis N.W."/>
            <person name="Kirkpatrick H.A."/>
            <person name="Goeden M.A."/>
            <person name="Rose D.J."/>
            <person name="Mau B."/>
            <person name="Shao Y."/>
        </authorList>
    </citation>
    <scope>NUCLEOTIDE SEQUENCE [LARGE SCALE GENOMIC DNA]</scope>
    <source>
        <strain>K12 / MG1655 / ATCC 47076</strain>
    </source>
</reference>
<reference key="5">
    <citation type="journal article" date="2006" name="Mol. Syst. Biol.">
        <title>Highly accurate genome sequences of Escherichia coli K-12 strains MG1655 and W3110.</title>
        <authorList>
            <person name="Hayashi K."/>
            <person name="Morooka N."/>
            <person name="Yamamoto Y."/>
            <person name="Fujita K."/>
            <person name="Isono K."/>
            <person name="Choi S."/>
            <person name="Ohtsubo E."/>
            <person name="Baba T."/>
            <person name="Wanner B.L."/>
            <person name="Mori H."/>
            <person name="Horiuchi T."/>
        </authorList>
    </citation>
    <scope>NUCLEOTIDE SEQUENCE [LARGE SCALE GENOMIC DNA]</scope>
    <source>
        <strain>K12 / W3110 / ATCC 27325 / DSM 5911</strain>
    </source>
</reference>
<reference key="6">
    <citation type="journal article" date="1983" name="Nucleic Acids Res.">
        <title>Transcription of the uvrD gene of Escherichia coli is controlled by the lexA repressor and by attenuation.</title>
        <authorList>
            <person name="Easton A.M."/>
            <person name="Kushner S.R."/>
        </authorList>
    </citation>
    <scope>NUCLEOTIDE SEQUENCE [GENOMIC DNA] OF 1-258</scope>
</reference>
<reference key="7">
    <citation type="journal article" date="1990" name="J. Bacteriol.">
        <title>Recombination at ColE1 cer requires the Escherichia coli xerC gene product, a member of the lambda integrase family of site-specific recombinases.</title>
        <authorList>
            <person name="Colloms S.D."/>
            <person name="Sykora P."/>
            <person name="Szatmari G."/>
            <person name="Sherratt D.J."/>
        </authorList>
    </citation>
    <scope>NUCLEOTIDE SEQUENCE [GENOMIC DNA] OF 1-17</scope>
    <source>
        <strain>K12</strain>
    </source>
</reference>
<reference key="8">
    <citation type="journal article" date="1986" name="J. Biol. Chem.">
        <title>Escherichia coli helicase II (urvD gene product) translocates unidirectionally in a 3' to 5' direction.</title>
        <authorList>
            <person name="Matson S.W."/>
        </authorList>
    </citation>
    <scope>TRANSLOCATES IN 3'-5' DIRECTION</scope>
</reference>
<reference key="9">
    <citation type="journal article" date="1990" name="Eur. J. Biochem.">
        <title>Direction of the DNA-unwinding reaction catalysed by Escherichia coli DNA helicase II.</title>
        <authorList>
            <person name="Georgi-Geisberger P."/>
            <person name="Hoffmann-Berling H."/>
        </authorList>
    </citation>
    <scope>FUNCTION AS A 3'-5' DNA HELICASE</scope>
</reference>
<reference key="10">
    <citation type="journal article" date="1993" name="J. Bacteriol.">
        <title>Characterization of DNA helicase II from a uvrD252 mutant of Escherichia coli.</title>
        <authorList>
            <person name="Washburn B.K."/>
            <person name="Kushner S.R."/>
        </authorList>
    </citation>
    <scope>FUNCTION</scope>
    <scope>CATALYTIC ACTIVITY</scope>
    <scope>BIOPHYSICOCHEMICAL PROPERTIES</scope>
    <scope>MUTAGENESIS OF GLY-30</scope>
</reference>
<reference key="11">
    <citation type="journal article" date="2015" name="Mol. Microbiol.">
        <title>Genetic analysis of Escherichia coli RadA: functional motifs and genetic interactions.</title>
        <authorList>
            <person name="Cooper D.L."/>
            <person name="Boyle D.C."/>
            <person name="Lovett S.T."/>
        </authorList>
    </citation>
    <scope>FUNCTION</scope>
    <scope>DISRUPTION PHENOTYPE</scope>
    <source>
        <strain>K12 / AB1157</strain>
    </source>
</reference>
<feature type="chain" id="PRO_0000102072" description="DNA helicase II">
    <location>
        <begin position="1"/>
        <end position="720"/>
    </location>
</feature>
<feature type="domain" description="UvrD-like helicase ATP-binding" evidence="2">
    <location>
        <begin position="8"/>
        <end position="286"/>
    </location>
</feature>
<feature type="domain" description="UvrD-like helicase C-terminal" evidence="3">
    <location>
        <begin position="287"/>
        <end position="564"/>
    </location>
</feature>
<feature type="binding site" evidence="2">
    <location>
        <begin position="32"/>
        <end position="37"/>
    </location>
    <ligand>
        <name>ATP</name>
        <dbReference type="ChEBI" id="CHEBI:30616"/>
    </ligand>
</feature>
<feature type="binding site" evidence="1">
    <location>
        <position position="284"/>
    </location>
    <ligand>
        <name>ATP</name>
        <dbReference type="ChEBI" id="CHEBI:30616"/>
    </ligand>
</feature>
<feature type="mutagenesis site" description="In uvrD252, UV sensitive, significant loss of DNA-dependent ATPase, helicase activity requires higher ATP and MgCl(2), nearly inactive on 96 bp dsDNA. KM for ATP rises to 1.2 mM." evidence="7">
    <original>G</original>
    <variation>D</variation>
    <location>
        <position position="30"/>
    </location>
</feature>
<feature type="sequence conflict" description="In Ref. 1; CAA25321." evidence="9" ref="1">
    <original>D</original>
    <variation>N</variation>
    <location>
        <position position="224"/>
    </location>
</feature>
<feature type="sequence conflict" description="In Ref. 1; CAA25321." evidence="9" ref="1">
    <original>SAA</original>
    <variation>NAR</variation>
    <location>
        <begin position="291"/>
        <end position="293"/>
    </location>
</feature>
<feature type="sequence conflict" description="In Ref. 1; CAA25321." evidence="9" ref="1">
    <original>A</original>
    <variation>T</variation>
    <location>
        <position position="330"/>
    </location>
</feature>
<feature type="sequence conflict" description="In Ref. 1; CAA25321." evidence="9" ref="1">
    <original>L</original>
    <variation>V</variation>
    <location>
        <position position="540"/>
    </location>
</feature>
<feature type="helix" evidence="15">
    <location>
        <begin position="4"/>
        <end position="7"/>
    </location>
</feature>
<feature type="strand" evidence="11">
    <location>
        <begin position="8"/>
        <end position="10"/>
    </location>
</feature>
<feature type="helix" evidence="15">
    <location>
        <begin position="12"/>
        <end position="18"/>
    </location>
</feature>
<feature type="strand" evidence="15">
    <location>
        <begin position="25"/>
        <end position="29"/>
    </location>
</feature>
<feature type="strand" evidence="12">
    <location>
        <begin position="31"/>
        <end position="33"/>
    </location>
</feature>
<feature type="helix" evidence="15">
    <location>
        <begin position="35"/>
        <end position="48"/>
    </location>
</feature>
<feature type="helix" evidence="15">
    <location>
        <begin position="54"/>
        <end position="56"/>
    </location>
</feature>
<feature type="strand" evidence="15">
    <location>
        <begin position="57"/>
        <end position="63"/>
    </location>
</feature>
<feature type="helix" evidence="15">
    <location>
        <begin position="64"/>
        <end position="78"/>
    </location>
</feature>
<feature type="strand" evidence="15">
    <location>
        <begin position="86"/>
        <end position="89"/>
    </location>
</feature>
<feature type="helix" evidence="15">
    <location>
        <begin position="90"/>
        <end position="100"/>
    </location>
</feature>
<feature type="helix" evidence="15">
    <location>
        <begin position="103"/>
        <end position="105"/>
    </location>
</feature>
<feature type="strand" evidence="15">
    <location>
        <begin position="112"/>
        <end position="114"/>
    </location>
</feature>
<feature type="helix" evidence="15">
    <location>
        <begin position="116"/>
        <end position="129"/>
    </location>
</feature>
<feature type="turn" evidence="15">
    <location>
        <begin position="134"/>
        <end position="136"/>
    </location>
</feature>
<feature type="helix" evidence="15">
    <location>
        <begin position="139"/>
        <end position="151"/>
    </location>
</feature>
<feature type="turn" evidence="14">
    <location>
        <begin position="156"/>
        <end position="158"/>
    </location>
</feature>
<feature type="helix" evidence="15">
    <location>
        <begin position="166"/>
        <end position="184"/>
    </location>
</feature>
<feature type="strand" evidence="15">
    <location>
        <begin position="186"/>
        <end position="188"/>
    </location>
</feature>
<feature type="helix" evidence="15">
    <location>
        <begin position="189"/>
        <end position="202"/>
    </location>
</feature>
<feature type="helix" evidence="15">
    <location>
        <begin position="204"/>
        <end position="213"/>
    </location>
</feature>
<feature type="strand" evidence="15">
    <location>
        <begin position="216"/>
        <end position="221"/>
    </location>
</feature>
<feature type="helix" evidence="15">
    <location>
        <begin position="222"/>
        <end position="224"/>
    </location>
</feature>
<feature type="helix" evidence="15">
    <location>
        <begin position="227"/>
        <end position="237"/>
    </location>
</feature>
<feature type="turn" evidence="15">
    <location>
        <begin position="238"/>
        <end position="240"/>
    </location>
</feature>
<feature type="strand" evidence="15">
    <location>
        <begin position="242"/>
        <end position="247"/>
    </location>
</feature>
<feature type="helix" evidence="15">
    <location>
        <begin position="249"/>
        <end position="251"/>
    </location>
</feature>
<feature type="helix" evidence="15">
    <location>
        <begin position="255"/>
        <end position="257"/>
    </location>
</feature>
<feature type="helix" evidence="15">
    <location>
        <begin position="263"/>
        <end position="270"/>
    </location>
</feature>
<feature type="strand" evidence="15">
    <location>
        <begin position="275"/>
        <end position="279"/>
    </location>
</feature>
<feature type="strand" evidence="15">
    <location>
        <begin position="283"/>
        <end position="285"/>
    </location>
</feature>
<feature type="helix" evidence="15">
    <location>
        <begin position="287"/>
        <end position="297"/>
    </location>
</feature>
<feature type="strand" evidence="14">
    <location>
        <begin position="300"/>
        <end position="302"/>
    </location>
</feature>
<feature type="strand" evidence="15">
    <location>
        <begin position="318"/>
        <end position="325"/>
    </location>
</feature>
<feature type="helix" evidence="15">
    <location>
        <begin position="326"/>
        <end position="342"/>
    </location>
</feature>
<feature type="helix" evidence="15">
    <location>
        <begin position="347"/>
        <end position="349"/>
    </location>
</feature>
<feature type="strand" evidence="15">
    <location>
        <begin position="350"/>
        <end position="356"/>
    </location>
</feature>
<feature type="helix" evidence="15">
    <location>
        <begin position="357"/>
        <end position="359"/>
    </location>
</feature>
<feature type="helix" evidence="15">
    <location>
        <begin position="360"/>
        <end position="369"/>
    </location>
</feature>
<feature type="strand" evidence="15">
    <location>
        <begin position="374"/>
        <end position="379"/>
    </location>
</feature>
<feature type="helix" evidence="15">
    <location>
        <begin position="382"/>
        <end position="384"/>
    </location>
</feature>
<feature type="helix" evidence="15">
    <location>
        <begin position="386"/>
        <end position="399"/>
    </location>
</feature>
<feature type="helix" evidence="15">
    <location>
        <begin position="404"/>
        <end position="410"/>
    </location>
</feature>
<feature type="helix" evidence="15">
    <location>
        <begin position="420"/>
        <end position="432"/>
    </location>
</feature>
<feature type="helix" evidence="15">
    <location>
        <begin position="437"/>
        <end position="446"/>
    </location>
</feature>
<feature type="helix" evidence="15">
    <location>
        <begin position="452"/>
        <end position="471"/>
    </location>
</feature>
<feature type="turn" evidence="15">
    <location>
        <begin position="472"/>
        <end position="474"/>
    </location>
</feature>
<feature type="helix" evidence="15">
    <location>
        <begin position="477"/>
        <end position="487"/>
    </location>
</feature>
<feature type="helix" evidence="15">
    <location>
        <begin position="490"/>
        <end position="495"/>
    </location>
</feature>
<feature type="helix" evidence="15">
    <location>
        <begin position="500"/>
        <end position="519"/>
    </location>
</feature>
<feature type="helix" evidence="15">
    <location>
        <begin position="530"/>
        <end position="540"/>
    </location>
</feature>
<feature type="helix" evidence="14">
    <location>
        <begin position="542"/>
        <end position="544"/>
    </location>
</feature>
<feature type="strand" evidence="15">
    <location>
        <begin position="554"/>
        <end position="558"/>
    </location>
</feature>
<feature type="helix" evidence="15">
    <location>
        <begin position="560"/>
        <end position="562"/>
    </location>
</feature>
<feature type="strand" evidence="15">
    <location>
        <begin position="567"/>
        <end position="572"/>
    </location>
</feature>
<feature type="turn" evidence="15">
    <location>
        <begin position="579"/>
        <end position="581"/>
    </location>
</feature>
<feature type="helix" evidence="14">
    <location>
        <begin position="583"/>
        <end position="586"/>
    </location>
</feature>
<feature type="strand" evidence="14">
    <location>
        <begin position="587"/>
        <end position="590"/>
    </location>
</feature>
<feature type="helix" evidence="15">
    <location>
        <begin position="592"/>
        <end position="603"/>
    </location>
</feature>
<feature type="strand" evidence="15">
    <location>
        <begin position="606"/>
        <end position="620"/>
    </location>
</feature>
<feature type="strand" evidence="15">
    <location>
        <begin position="623"/>
        <end position="626"/>
    </location>
</feature>
<feature type="helix" evidence="15">
    <location>
        <begin position="631"/>
        <end position="635"/>
    </location>
</feature>
<feature type="helix" evidence="15">
    <location>
        <begin position="638"/>
        <end position="640"/>
    </location>
</feature>
<feature type="strand" evidence="15">
    <location>
        <begin position="641"/>
        <end position="643"/>
    </location>
</feature>
<feature type="strand" evidence="13">
    <location>
        <begin position="646"/>
        <end position="649"/>
    </location>
</feature>
<feature type="strand" evidence="16">
    <location>
        <begin position="651"/>
        <end position="654"/>
    </location>
</feature>
<feature type="strand" evidence="17">
    <location>
        <begin position="675"/>
        <end position="678"/>
    </location>
</feature>
<feature type="turn" evidence="17">
    <location>
        <begin position="679"/>
        <end position="681"/>
    </location>
</feature>
<feature type="strand" evidence="17">
    <location>
        <begin position="682"/>
        <end position="690"/>
    </location>
</feature>
<feature type="helix" evidence="17">
    <location>
        <begin position="693"/>
        <end position="695"/>
    </location>
</feature>
<feature type="strand" evidence="17">
    <location>
        <begin position="697"/>
        <end position="702"/>
    </location>
</feature>
<feature type="turn" evidence="17">
    <location>
        <begin position="703"/>
        <end position="705"/>
    </location>
</feature>
<feature type="strand" evidence="17">
    <location>
        <begin position="706"/>
        <end position="711"/>
    </location>
</feature>
<feature type="helix" evidence="17">
    <location>
        <begin position="712"/>
        <end position="714"/>
    </location>
</feature>
<feature type="strand" evidence="17">
    <location>
        <begin position="717"/>
        <end position="719"/>
    </location>
</feature>
<sequence>MDVSYLLDSLNDKQREAVAAPRSNLLVLAGAGSGKTRVLVHRIAWLMSVENCSPYSIMAVTFTNKAAAEMRHRIGQLMGTSQGGMWVGTFHGLAHRLLRAHHMDANLPQDFQILDSEDQLRLLKRLIKAMNLDEKQWPPRQAMWYINSQKDEGLRPHHIQSYGNPVEQTWQKVYQAYQEACDRAGLVDFAELLLRAHELWLNKPHILQHYRERFTNILVDEFQDTNNIQYAWIRLLAGDTGKVMIVGDDDQSIYGWRGAQVENIQRFLNDFPGAETIRLEQNYRSTSNILSAANALIENNNGRLGKKLWTDGADGEPISLYCAFNELDEARFVVNRIKTWQDNGGALAECAILYRSNAQSRVLEEALLQASMPYRIYGGMRFFERQEIKDALSYLRLIANRNDDAAFERVVNTPTRGIGDRTLDVVRQTSRDRQLTLWQACRELLQEKALAGRAASALQRFMELIDALAQETADMPLHVQTDRVIKDSGLRTMYEQEKGEKGQTRIENLEELVTATRQFSYNEEDEDLMPLQAFLSHAALEAGEGQADTWQDAVQLMTLHSAKGLEFPQVFIVGMEEGMFPSQMSLDEGGRLEEERRLAYVGVTRAMQKLTLTYAETRRLYGKEVYHRPSRFIGELPEECVEEVRLRATVSRPVSHQRMGTPMVENDSGYKLGQRVRHAKFGEGTIVNMEGSGEHSRLQVAFQGQGIKWLVAAYARLESV</sequence>